<keyword id="KW-0025">Alternative splicing</keyword>
<keyword id="KW-0158">Chromosome</keyword>
<keyword id="KW-0238">DNA-binding</keyword>
<keyword id="KW-1017">Isopeptide bond</keyword>
<keyword id="KW-0479">Metal-binding</keyword>
<keyword id="KW-0539">Nucleus</keyword>
<keyword id="KW-1185">Reference proteome</keyword>
<keyword id="KW-0677">Repeat</keyword>
<keyword id="KW-0779">Telomere</keyword>
<keyword id="KW-0804">Transcription</keyword>
<keyword id="KW-0805">Transcription regulation</keyword>
<keyword id="KW-0832">Ubl conjugation</keyword>
<keyword id="KW-0862">Zinc</keyword>
<keyword id="KW-0863">Zinc-finger</keyword>
<protein>
    <recommendedName>
        <fullName>Zinc finger protein 827</fullName>
    </recommendedName>
</protein>
<name>ZN827_MOUSE</name>
<feature type="chain" id="PRO_0000325891" description="Zinc finger protein 827">
    <location>
        <begin position="1"/>
        <end position="1078"/>
    </location>
</feature>
<feature type="zinc finger region" description="C2H2-type 1" evidence="2">
    <location>
        <begin position="371"/>
        <end position="393"/>
    </location>
</feature>
<feature type="zinc finger region" description="C2H2-type 2" evidence="2">
    <location>
        <begin position="399"/>
        <end position="421"/>
    </location>
</feature>
<feature type="zinc finger region" description="C2H2-type 3" evidence="2">
    <location>
        <begin position="430"/>
        <end position="452"/>
    </location>
</feature>
<feature type="zinc finger region" description="C2H2-type 4" evidence="2">
    <location>
        <begin position="814"/>
        <end position="836"/>
    </location>
</feature>
<feature type="zinc finger region" description="C2H2-type 5" evidence="2">
    <location>
        <begin position="842"/>
        <end position="864"/>
    </location>
</feature>
<feature type="zinc finger region" description="C2H2-type 6" evidence="2">
    <location>
        <begin position="894"/>
        <end position="916"/>
    </location>
</feature>
<feature type="zinc finger region" description="C2H2-type 7" evidence="2">
    <location>
        <begin position="926"/>
        <end position="949"/>
    </location>
</feature>
<feature type="zinc finger region" description="C2H2-type 8" evidence="2">
    <location>
        <begin position="1016"/>
        <end position="1038"/>
    </location>
</feature>
<feature type="zinc finger region" description="C2H2-type 9" evidence="2">
    <location>
        <begin position="1044"/>
        <end position="1066"/>
    </location>
</feature>
<feature type="region of interest" description="Disordered" evidence="3">
    <location>
        <begin position="1"/>
        <end position="76"/>
    </location>
</feature>
<feature type="region of interest" description="Mediates direct interaction with RBBP4" evidence="1">
    <location>
        <begin position="1"/>
        <end position="14"/>
    </location>
</feature>
<feature type="region of interest" description="Disordered" evidence="3">
    <location>
        <begin position="307"/>
        <end position="341"/>
    </location>
</feature>
<feature type="region of interest" description="Disordered" evidence="3">
    <location>
        <begin position="466"/>
        <end position="490"/>
    </location>
</feature>
<feature type="region of interest" description="Disordered" evidence="3">
    <location>
        <begin position="594"/>
        <end position="640"/>
    </location>
</feature>
<feature type="region of interest" description="Disordered" evidence="3">
    <location>
        <begin position="945"/>
        <end position="990"/>
    </location>
</feature>
<feature type="short sequence motif" description="RRK motif; mediates NuRD recruitment to telomeres" evidence="1">
    <location>
        <begin position="3"/>
        <end position="5"/>
    </location>
</feature>
<feature type="compositionally biased region" description="Basic and acidic residues" evidence="3">
    <location>
        <begin position="1"/>
        <end position="10"/>
    </location>
</feature>
<feature type="compositionally biased region" description="Polar residues" evidence="3">
    <location>
        <begin position="33"/>
        <end position="42"/>
    </location>
</feature>
<feature type="compositionally biased region" description="Polar residues" evidence="3">
    <location>
        <begin position="62"/>
        <end position="76"/>
    </location>
</feature>
<feature type="compositionally biased region" description="Pro residues" evidence="3">
    <location>
        <begin position="326"/>
        <end position="338"/>
    </location>
</feature>
<feature type="compositionally biased region" description="Low complexity" evidence="3">
    <location>
        <begin position="613"/>
        <end position="627"/>
    </location>
</feature>
<feature type="compositionally biased region" description="Basic and acidic residues" evidence="3">
    <location>
        <begin position="945"/>
        <end position="957"/>
    </location>
</feature>
<feature type="compositionally biased region" description="Low complexity" evidence="3">
    <location>
        <begin position="958"/>
        <end position="974"/>
    </location>
</feature>
<feature type="compositionally biased region" description="Basic and acidic residues" evidence="3">
    <location>
        <begin position="976"/>
        <end position="985"/>
    </location>
</feature>
<feature type="cross-link" description="Glycyl lysine isopeptide (Lys-Gly) (interchain with G-Cter in SUMO2)" evidence="1">
    <location>
        <position position="175"/>
    </location>
</feature>
<feature type="cross-link" description="Glycyl lysine isopeptide (Lys-Gly) (interchain with G-Cter in SUMO2)" evidence="1">
    <location>
        <position position="215"/>
    </location>
</feature>
<feature type="cross-link" description="Glycyl lysine isopeptide (Lys-Gly) (interchain with G-Cter in SUMO2)" evidence="1">
    <location>
        <position position="225"/>
    </location>
</feature>
<feature type="cross-link" description="Glycyl lysine isopeptide (Lys-Gly) (interchain with G-Cter in SUMO2)" evidence="1">
    <location>
        <position position="357"/>
    </location>
</feature>
<feature type="cross-link" description="Glycyl lysine isopeptide (Lys-Gly) (interchain with G-Cter in SUMO2)" evidence="1">
    <location>
        <position position="369"/>
    </location>
</feature>
<feature type="cross-link" description="Glycyl lysine isopeptide (Lys-Gly) (interchain with G-Cter in SUMO2)" evidence="1">
    <location>
        <position position="463"/>
    </location>
</feature>
<feature type="cross-link" description="Glycyl lysine isopeptide (Lys-Gly) (interchain with G-Cter in SUMO2)" evidence="1">
    <location>
        <position position="472"/>
    </location>
</feature>
<feature type="cross-link" description="Glycyl lysine isopeptide (Lys-Gly) (interchain with G-Cter in SUMO2)" evidence="1">
    <location>
        <position position="520"/>
    </location>
</feature>
<feature type="cross-link" description="Glycyl lysine isopeptide (Lys-Gly) (interchain with G-Cter in SUMO2)" evidence="1">
    <location>
        <position position="546"/>
    </location>
</feature>
<feature type="cross-link" description="Glycyl lysine isopeptide (Lys-Gly) (interchain with G-Cter in SUMO2)" evidence="1">
    <location>
        <position position="577"/>
    </location>
</feature>
<feature type="cross-link" description="Glycyl lysine isopeptide (Lys-Gly) (interchain with G-Cter in SUMO2)" evidence="1">
    <location>
        <position position="584"/>
    </location>
</feature>
<feature type="cross-link" description="Glycyl lysine isopeptide (Lys-Gly) (interchain with G-Cter in SUMO2)" evidence="1">
    <location>
        <position position="594"/>
    </location>
</feature>
<feature type="cross-link" description="Glycyl lysine isopeptide (Lys-Gly) (interchain with G-Cter in SUMO2)" evidence="1">
    <location>
        <position position="636"/>
    </location>
</feature>
<feature type="cross-link" description="Glycyl lysine isopeptide (Lys-Gly) (interchain with G-Cter in SUMO2)" evidence="1">
    <location>
        <position position="655"/>
    </location>
</feature>
<feature type="cross-link" description="Glycyl lysine isopeptide (Lys-Gly) (interchain with G-Cter in SUMO1); alternate" evidence="1">
    <location>
        <position position="670"/>
    </location>
</feature>
<feature type="cross-link" description="Glycyl lysine isopeptide (Lys-Gly) (interchain with G-Cter in SUMO2); alternate" evidence="1">
    <location>
        <position position="670"/>
    </location>
</feature>
<feature type="cross-link" description="Glycyl lysine isopeptide (Lys-Gly) (interchain with G-Cter in SUMO2)" evidence="1">
    <location>
        <position position="701"/>
    </location>
</feature>
<feature type="cross-link" description="Glycyl lysine isopeptide (Lys-Gly) (interchain with G-Cter in SUMO2)" evidence="1">
    <location>
        <position position="707"/>
    </location>
</feature>
<feature type="cross-link" description="Glycyl lysine isopeptide (Lys-Gly) (interchain with G-Cter in SUMO2)" evidence="1">
    <location>
        <position position="739"/>
    </location>
</feature>
<feature type="cross-link" description="Glycyl lysine isopeptide (Lys-Gly) (interchain with G-Cter in SUMO2)" evidence="1">
    <location>
        <position position="775"/>
    </location>
</feature>
<feature type="cross-link" description="Glycyl lysine isopeptide (Lys-Gly) (interchain with G-Cter in SUMO2)" evidence="1">
    <location>
        <position position="795"/>
    </location>
</feature>
<feature type="cross-link" description="Glycyl lysine isopeptide (Lys-Gly) (interchain with G-Cter in SUMO2)" evidence="1">
    <location>
        <position position="867"/>
    </location>
</feature>
<feature type="cross-link" description="Glycyl lysine isopeptide (Lys-Gly) (interchain with G-Cter in SUMO2)" evidence="1">
    <location>
        <position position="888"/>
    </location>
</feature>
<feature type="cross-link" description="Glycyl lysine isopeptide (Lys-Gly) (interchain with G-Cter in SUMO2)" evidence="1">
    <location>
        <position position="955"/>
    </location>
</feature>
<feature type="cross-link" description="Glycyl lysine isopeptide (Lys-Gly) (interchain with G-Cter in SUMO2)" evidence="1">
    <location>
        <position position="1011"/>
    </location>
</feature>
<feature type="splice variant" id="VSP_032466" description="In isoform 2." evidence="4">
    <original>HQHQDRGETFQCQLCPFTSSRHFSLKLHMRCHQHFLRTEAKVKEEIPDPDVKGSPHLSDSGCLGQQREGGGTELVGTVMTSNTPERTGQ</original>
    <variation>SHLPRRGRGFVLFSTAGGFLADREHCGGAGLRKLTLGCE</variation>
    <location>
        <begin position="421"/>
        <end position="509"/>
    </location>
</feature>
<feature type="splice variant" id="VSP_032467" description="In isoform 2." evidence="4">
    <location>
        <begin position="510"/>
        <end position="1078"/>
    </location>
</feature>
<accession>Q505G8</accession>
<accession>B2RXD8</accession>
<accession>Q5M7B0</accession>
<comment type="function">
    <text evidence="1">As part of a ribonucleoprotein complex composed at least of HNRNPK, HNRNPL and the circular RNA circZNF827 that nucleates the complex on chromatin, may negatively regulate the transcription of genes involved in neuronal differentiation. Could also recruit the nucleosome remodeling and histone deacetylase/NuRD complex to telomeric regions of chromosomes to regulate chromatin remodeling as part of telomere maintenance.</text>
</comment>
<comment type="subunit">
    <text evidence="1">Part of a transcription inhibitory ribonucleoprotein complex composed at least of the circular RNA circZNF827, HNRNPK and HNRNPL. Interacts with the nucleosome remodeling and histone deacetylase/NuRD complex. Interacts with RBBP4; the interaction is direct and recruits RBBP4, a component of the NuRD complex, to telomeres.</text>
</comment>
<comment type="subcellular location">
    <subcellularLocation>
        <location evidence="1">Nucleus</location>
    </subcellularLocation>
    <subcellularLocation>
        <location evidence="1">Chromosome</location>
        <location evidence="1">Telomere</location>
    </subcellularLocation>
</comment>
<comment type="alternative products">
    <event type="alternative splicing"/>
    <isoform>
        <id>Q505G8-1</id>
        <name>1</name>
        <sequence type="displayed"/>
    </isoform>
    <isoform>
        <id>Q505G8-2</id>
        <name>2</name>
        <sequence type="described" ref="VSP_032466 VSP_032467"/>
    </isoform>
</comment>
<comment type="similarity">
    <text evidence="5">Belongs to the krueppel C2H2-type zinc-finger protein family.</text>
</comment>
<comment type="sequence caution" evidence="5">
    <conflict type="erroneous initiation">
        <sequence resource="EMBL-CDS" id="AAH88739"/>
    </conflict>
</comment>
<proteinExistence type="evidence at protein level"/>
<evidence type="ECO:0000250" key="1">
    <source>
        <dbReference type="UniProtKB" id="Q17R98"/>
    </source>
</evidence>
<evidence type="ECO:0000255" key="2">
    <source>
        <dbReference type="PROSITE-ProRule" id="PRU00042"/>
    </source>
</evidence>
<evidence type="ECO:0000256" key="3">
    <source>
        <dbReference type="SAM" id="MobiDB-lite"/>
    </source>
</evidence>
<evidence type="ECO:0000303" key="4">
    <source>
    </source>
</evidence>
<evidence type="ECO:0000305" key="5"/>
<sequence length="1078" mass="118536">MPRRKQEQPKRLPSHVSRQDEAEGDFSEGEQWYGNSSETPSEASYGEVQENYKLSLEDRIQEQSTSPDTSLGSATPSSHTLELVALDGEVLRDSLQCQGHLSPGVSSVCDDDPPSSNKPLSSNLRRLLEAGSLKLDGTANGRVESPVNVGPSLSFSPPSHHAQQLSVLARKLAEKQDQSDQFTPSNRFIWNQGKWLPNSTTTCGLSPDSAILKLKAAANAVLQDKSLSRTEESLRFESFSSPFSSQSASSTLAALSKKVSERSLTPGQEHPPPASSFLSLASMTSSAALLKEVAARAAGSLLAEKSSLLPDDPLPLPSSEKKPEKVTPPPPPPPPTAQPPQSLELLLLPVSKGRASKPSNSAPEEESGKPFQCPICGLVIKRKSYWKRHMVIHTGLKSHQCPLCPFRCARKDNLKSHMKVHQHQDRGETFQCQLCPFTSSRHFSLKLHMRCHQHFLRTEAKVKEEIPDPDVKGSPHLSDSGCLGQQREGGGTELVGTVMTSNTPERTGQGGAGVAPLLVKEEPKEDNGLPTSFTLNAADRPANHTKLKDPSEYVSNSAAVLFSQDISVKMASDFLMKLSAANQKEPMNLNFKVKEEPKEEESLSMPLPRSSYVFSPEPEVSTPSVSEDPLTPQEGKGSVLRRDMSAKAASELLMKLSAESYKETQAVTVKEEPMEVDIQDSPASISPSRNIGYSTLMGREKTEPLQKLPEGRVPPERNLFSQDISVKMASELLFQLSEKVSKEHNHTKENAMRTTTSPFFSEDTFRQSPFTSNSKDLLPGESVLHGRVSAPETEKIVLEAGNGLPSWKFNDQLFPCDVCGKVFGRQQTLSRHLSLHTEERKYKCHLCPYAAKCRANLNQHLTVHSVKLVSTDTEDIVSAVTSEGSDGKKHPYYYSCHVCGFETELNVQFVSHMSLHVDKEQWMFSICCTACDFVTMEEAEIKTHIGTKHTGDDRKTPSESNSPSSSSLSTLSDSANGKDDSDSSQKNKGGNNLLVISVVPGSQPSLNNEEKPEKGFECVFCNFVCKTKNMFERHLQIHLITRMFECDVCHKFMKTPEQLLEHKKCHTVPTGGLNSGQW</sequence>
<gene>
    <name type="primary">Znf827</name>
    <name type="synonym">Zfp827</name>
</gene>
<organism>
    <name type="scientific">Mus musculus</name>
    <name type="common">Mouse</name>
    <dbReference type="NCBI Taxonomy" id="10090"/>
    <lineage>
        <taxon>Eukaryota</taxon>
        <taxon>Metazoa</taxon>
        <taxon>Chordata</taxon>
        <taxon>Craniata</taxon>
        <taxon>Vertebrata</taxon>
        <taxon>Euteleostomi</taxon>
        <taxon>Mammalia</taxon>
        <taxon>Eutheria</taxon>
        <taxon>Euarchontoglires</taxon>
        <taxon>Glires</taxon>
        <taxon>Rodentia</taxon>
        <taxon>Myomorpha</taxon>
        <taxon>Muroidea</taxon>
        <taxon>Muridae</taxon>
        <taxon>Murinae</taxon>
        <taxon>Mus</taxon>
        <taxon>Mus</taxon>
    </lineage>
</organism>
<reference key="1">
    <citation type="journal article" date="2009" name="PLoS Biol.">
        <title>Lineage-specific biology revealed by a finished genome assembly of the mouse.</title>
        <authorList>
            <person name="Church D.M."/>
            <person name="Goodstadt L."/>
            <person name="Hillier L.W."/>
            <person name="Zody M.C."/>
            <person name="Goldstein S."/>
            <person name="She X."/>
            <person name="Bult C.J."/>
            <person name="Agarwala R."/>
            <person name="Cherry J.L."/>
            <person name="DiCuccio M."/>
            <person name="Hlavina W."/>
            <person name="Kapustin Y."/>
            <person name="Meric P."/>
            <person name="Maglott D."/>
            <person name="Birtle Z."/>
            <person name="Marques A.C."/>
            <person name="Graves T."/>
            <person name="Zhou S."/>
            <person name="Teague B."/>
            <person name="Potamousis K."/>
            <person name="Churas C."/>
            <person name="Place M."/>
            <person name="Herschleb J."/>
            <person name="Runnheim R."/>
            <person name="Forrest D."/>
            <person name="Amos-Landgraf J."/>
            <person name="Schwartz D.C."/>
            <person name="Cheng Z."/>
            <person name="Lindblad-Toh K."/>
            <person name="Eichler E.E."/>
            <person name="Ponting C.P."/>
        </authorList>
    </citation>
    <scope>NUCLEOTIDE SEQUENCE [LARGE SCALE GENOMIC DNA]</scope>
    <source>
        <strain>C57BL/6J</strain>
    </source>
</reference>
<reference key="2">
    <citation type="journal article" date="2004" name="Genome Res.">
        <title>The status, quality, and expansion of the NIH full-length cDNA project: the Mammalian Gene Collection (MGC).</title>
        <authorList>
            <consortium name="The MGC Project Team"/>
        </authorList>
    </citation>
    <scope>NUCLEOTIDE SEQUENCE [LARGE SCALE MRNA] (ISOFORMS 1 AND 2)</scope>
    <source>
        <strain>C57BL/6J</strain>
        <tissue>Brain</tissue>
        <tissue>Kidney</tissue>
    </source>
</reference>
<reference key="3">
    <citation type="journal article" date="2010" name="Cell">
        <title>A tissue-specific atlas of mouse protein phosphorylation and expression.</title>
        <authorList>
            <person name="Huttlin E.L."/>
            <person name="Jedrychowski M.P."/>
            <person name="Elias J.E."/>
            <person name="Goswami T."/>
            <person name="Rad R."/>
            <person name="Beausoleil S.A."/>
            <person name="Villen J."/>
            <person name="Haas W."/>
            <person name="Sowa M.E."/>
            <person name="Gygi S.P."/>
        </authorList>
    </citation>
    <scope>IDENTIFICATION BY MASS SPECTROMETRY [LARGE SCALE ANALYSIS]</scope>
    <source>
        <tissue>Kidney</tissue>
    </source>
</reference>
<dbReference type="EMBL" id="AC101790">
    <property type="status" value="NOT_ANNOTATED_CDS"/>
    <property type="molecule type" value="Genomic_DNA"/>
</dbReference>
<dbReference type="EMBL" id="AC123597">
    <property type="status" value="NOT_ANNOTATED_CDS"/>
    <property type="molecule type" value="Genomic_DNA"/>
</dbReference>
<dbReference type="EMBL" id="BC088739">
    <property type="protein sequence ID" value="AAH88739.1"/>
    <property type="status" value="ALT_INIT"/>
    <property type="molecule type" value="mRNA"/>
</dbReference>
<dbReference type="EMBL" id="BC094552">
    <property type="protein sequence ID" value="AAH94552.1"/>
    <property type="molecule type" value="mRNA"/>
</dbReference>
<dbReference type="EMBL" id="BC151183">
    <property type="protein sequence ID" value="AAI51184.1"/>
    <property type="molecule type" value="mRNA"/>
</dbReference>
<dbReference type="CCDS" id="CCDS52604.1">
    <molecule id="Q505G8-1"/>
</dbReference>
<dbReference type="RefSeq" id="NP_001281208.1">
    <property type="nucleotide sequence ID" value="NM_001294279.1"/>
</dbReference>
<dbReference type="RefSeq" id="NP_839998.2">
    <molecule id="Q505G8-1"/>
    <property type="nucleotide sequence ID" value="NM_178267.3"/>
</dbReference>
<dbReference type="FunCoup" id="Q505G8">
    <property type="interactions" value="1012"/>
</dbReference>
<dbReference type="STRING" id="10090.ENSMUSP00000096214"/>
<dbReference type="GlyGen" id="Q505G8">
    <property type="glycosylation" value="1 site"/>
</dbReference>
<dbReference type="iPTMnet" id="Q505G8"/>
<dbReference type="PhosphoSitePlus" id="Q505G8"/>
<dbReference type="PaxDb" id="10090-ENSMUSP00000096214"/>
<dbReference type="ProteomicsDB" id="275301">
    <molecule id="Q505G8-1"/>
</dbReference>
<dbReference type="ProteomicsDB" id="275302">
    <molecule id="Q505G8-2"/>
</dbReference>
<dbReference type="Pumba" id="Q505G8"/>
<dbReference type="Antibodypedia" id="56760">
    <property type="antibodies" value="21 antibodies from 10 providers"/>
</dbReference>
<dbReference type="Ensembl" id="ENSMUST00000087927.11">
    <molecule id="Q505G8-2"/>
    <property type="protein sequence ID" value="ENSMUSP00000085238.5"/>
    <property type="gene ID" value="ENSMUSG00000071064.16"/>
</dbReference>
<dbReference type="Ensembl" id="ENSMUST00000098614.9">
    <molecule id="Q505G8-1"/>
    <property type="protein sequence ID" value="ENSMUSP00000096214.3"/>
    <property type="gene ID" value="ENSMUSG00000071064.16"/>
</dbReference>
<dbReference type="GeneID" id="622675"/>
<dbReference type="KEGG" id="mmu:622675"/>
<dbReference type="UCSC" id="uc009mig.1">
    <molecule id="Q505G8-2"/>
    <property type="organism name" value="mouse"/>
</dbReference>
<dbReference type="UCSC" id="uc009mii.1">
    <molecule id="Q505G8-1"/>
    <property type="organism name" value="mouse"/>
</dbReference>
<dbReference type="AGR" id="MGI:2444807"/>
<dbReference type="CTD" id="622675"/>
<dbReference type="MGI" id="MGI:2444807">
    <property type="gene designation" value="Zfp827"/>
</dbReference>
<dbReference type="VEuPathDB" id="HostDB:ENSMUSG00000071064"/>
<dbReference type="eggNOG" id="KOG1721">
    <property type="taxonomic scope" value="Eukaryota"/>
</dbReference>
<dbReference type="GeneTree" id="ENSGT00940000156063"/>
<dbReference type="HOGENOM" id="CLU_595746_0_0_1"/>
<dbReference type="InParanoid" id="Q505G8"/>
<dbReference type="OrthoDB" id="6910977at2759"/>
<dbReference type="PhylomeDB" id="Q505G8"/>
<dbReference type="TreeFam" id="TF333046"/>
<dbReference type="BioGRID-ORCS" id="622675">
    <property type="hits" value="5 hits in 77 CRISPR screens"/>
</dbReference>
<dbReference type="ChiTaRS" id="Zfp827">
    <property type="organism name" value="mouse"/>
</dbReference>
<dbReference type="PRO" id="PR:Q505G8"/>
<dbReference type="Proteomes" id="UP000000589">
    <property type="component" value="Chromosome 8"/>
</dbReference>
<dbReference type="RNAct" id="Q505G8">
    <property type="molecule type" value="protein"/>
</dbReference>
<dbReference type="Bgee" id="ENSMUSG00000071064">
    <property type="expression patterns" value="Expressed in humerus cartilage element and 205 other cell types or tissues"/>
</dbReference>
<dbReference type="ExpressionAtlas" id="Q505G8">
    <property type="expression patterns" value="baseline and differential"/>
</dbReference>
<dbReference type="GO" id="GO:0000785">
    <property type="term" value="C:chromatin"/>
    <property type="evidence" value="ECO:0000250"/>
    <property type="project" value="UniProtKB"/>
</dbReference>
<dbReference type="GO" id="GO:0000781">
    <property type="term" value="C:chromosome, telomeric region"/>
    <property type="evidence" value="ECO:0000250"/>
    <property type="project" value="UniProtKB"/>
</dbReference>
<dbReference type="GO" id="GO:0005634">
    <property type="term" value="C:nucleus"/>
    <property type="evidence" value="ECO:0007669"/>
    <property type="project" value="UniProtKB-SubCell"/>
</dbReference>
<dbReference type="GO" id="GO:1990904">
    <property type="term" value="C:ribonucleoprotein complex"/>
    <property type="evidence" value="ECO:0000250"/>
    <property type="project" value="UniProtKB"/>
</dbReference>
<dbReference type="GO" id="GO:0003677">
    <property type="term" value="F:DNA binding"/>
    <property type="evidence" value="ECO:0007669"/>
    <property type="project" value="UniProtKB-KW"/>
</dbReference>
<dbReference type="GO" id="GO:0120325">
    <property type="term" value="F:NuRD complex binding"/>
    <property type="evidence" value="ECO:0000250"/>
    <property type="project" value="UniProtKB"/>
</dbReference>
<dbReference type="GO" id="GO:0008270">
    <property type="term" value="F:zinc ion binding"/>
    <property type="evidence" value="ECO:0007669"/>
    <property type="project" value="UniProtKB-KW"/>
</dbReference>
<dbReference type="GO" id="GO:0006338">
    <property type="term" value="P:chromatin remodeling"/>
    <property type="evidence" value="ECO:0000250"/>
    <property type="project" value="UniProtKB"/>
</dbReference>
<dbReference type="GO" id="GO:0070200">
    <property type="term" value="P:establishment of protein localization to telomere"/>
    <property type="evidence" value="ECO:0000250"/>
    <property type="project" value="UniProtKB"/>
</dbReference>
<dbReference type="GO" id="GO:0045892">
    <property type="term" value="P:negative regulation of DNA-templated transcription"/>
    <property type="evidence" value="ECO:0000250"/>
    <property type="project" value="UniProtKB"/>
</dbReference>
<dbReference type="GO" id="GO:1904791">
    <property type="term" value="P:negative regulation of shelterin complex assembly"/>
    <property type="evidence" value="ECO:0000250"/>
    <property type="project" value="UniProtKB"/>
</dbReference>
<dbReference type="GO" id="GO:0000723">
    <property type="term" value="P:telomere maintenance"/>
    <property type="evidence" value="ECO:0000250"/>
    <property type="project" value="UniProtKB"/>
</dbReference>
<dbReference type="FunFam" id="3.30.160.60:FF:000272">
    <property type="entry name" value="Zinc finger protein 827"/>
    <property type="match status" value="1"/>
</dbReference>
<dbReference type="FunFam" id="3.30.160.60:FF:000415">
    <property type="entry name" value="Zinc finger protein 827"/>
    <property type="match status" value="1"/>
</dbReference>
<dbReference type="FunFam" id="3.30.160.60:FF:000435">
    <property type="entry name" value="Zinc finger protein 827"/>
    <property type="match status" value="1"/>
</dbReference>
<dbReference type="FunFam" id="3.30.160.60:FF:002599">
    <property type="entry name" value="Zinc finger protein 827"/>
    <property type="match status" value="1"/>
</dbReference>
<dbReference type="FunFam" id="3.30.160.60:FF:000484">
    <property type="entry name" value="zinc finger protein 827 isoform X1"/>
    <property type="match status" value="1"/>
</dbReference>
<dbReference type="Gene3D" id="3.30.160.60">
    <property type="entry name" value="Classic Zinc Finger"/>
    <property type="match status" value="5"/>
</dbReference>
<dbReference type="InterPro" id="IPR050688">
    <property type="entry name" value="Zinc_finger/UBP_domain"/>
</dbReference>
<dbReference type="InterPro" id="IPR036236">
    <property type="entry name" value="Znf_C2H2_sf"/>
</dbReference>
<dbReference type="InterPro" id="IPR013087">
    <property type="entry name" value="Znf_C2H2_type"/>
</dbReference>
<dbReference type="PANTHER" id="PTHR24403">
    <property type="entry name" value="ZINC FINGER PROTEIN"/>
    <property type="match status" value="1"/>
</dbReference>
<dbReference type="PANTHER" id="PTHR24403:SF62">
    <property type="entry name" value="ZINC FINGER PROTEIN 827"/>
    <property type="match status" value="1"/>
</dbReference>
<dbReference type="Pfam" id="PF00096">
    <property type="entry name" value="zf-C2H2"/>
    <property type="match status" value="3"/>
</dbReference>
<dbReference type="SMART" id="SM00355">
    <property type="entry name" value="ZnF_C2H2"/>
    <property type="match status" value="9"/>
</dbReference>
<dbReference type="SUPFAM" id="SSF57667">
    <property type="entry name" value="beta-beta-alpha zinc fingers"/>
    <property type="match status" value="3"/>
</dbReference>
<dbReference type="PROSITE" id="PS00028">
    <property type="entry name" value="ZINC_FINGER_C2H2_1"/>
    <property type="match status" value="5"/>
</dbReference>
<dbReference type="PROSITE" id="PS50157">
    <property type="entry name" value="ZINC_FINGER_C2H2_2"/>
    <property type="match status" value="5"/>
</dbReference>